<keyword id="KW-0256">Endoplasmic reticulum</keyword>
<keyword id="KW-0349">Heme</keyword>
<keyword id="KW-0408">Iron</keyword>
<keyword id="KW-0443">Lipid metabolism</keyword>
<keyword id="KW-0456">Lyase</keyword>
<keyword id="KW-0472">Membrane</keyword>
<keyword id="KW-0479">Metal-binding</keyword>
<keyword id="KW-0492">Microsome</keyword>
<keyword id="KW-0503">Monooxygenase</keyword>
<keyword id="KW-0560">Oxidoreductase</keyword>
<keyword id="KW-1185">Reference proteome</keyword>
<keyword id="KW-0755">Steroidogenesis</keyword>
<dbReference type="EC" id="1.14.14.19" evidence="2"/>
<dbReference type="EC" id="1.14.14.32" evidence="2"/>
<dbReference type="EMBL" id="AF458332">
    <property type="protein sequence ID" value="AAN86253.1"/>
    <property type="molecule type" value="mRNA"/>
</dbReference>
<dbReference type="RefSeq" id="NP_001035322.1">
    <property type="nucleotide sequence ID" value="NM_001040232.1"/>
</dbReference>
<dbReference type="SMR" id="Q8HYM9"/>
<dbReference type="FunCoup" id="Q8HYM9">
    <property type="interactions" value="384"/>
</dbReference>
<dbReference type="STRING" id="9544.ENSMMUP00000061406"/>
<dbReference type="PaxDb" id="9544-ENSMMUP00000023165"/>
<dbReference type="GeneID" id="678693"/>
<dbReference type="KEGG" id="mcc:678693"/>
<dbReference type="CTD" id="1586"/>
<dbReference type="eggNOG" id="KOG0156">
    <property type="taxonomic scope" value="Eukaryota"/>
</dbReference>
<dbReference type="InParanoid" id="Q8HYM9"/>
<dbReference type="OrthoDB" id="1470350at2759"/>
<dbReference type="UniPathway" id="UPA00788"/>
<dbReference type="Proteomes" id="UP000006718">
    <property type="component" value="Unassembled WGS sequence"/>
</dbReference>
<dbReference type="GO" id="GO:0005789">
    <property type="term" value="C:endoplasmic reticulum membrane"/>
    <property type="evidence" value="ECO:0007669"/>
    <property type="project" value="UniProtKB-SubCell"/>
</dbReference>
<dbReference type="GO" id="GO:0020037">
    <property type="term" value="F:heme binding"/>
    <property type="evidence" value="ECO:0000250"/>
    <property type="project" value="UniProtKB"/>
</dbReference>
<dbReference type="GO" id="GO:0005506">
    <property type="term" value="F:iron ion binding"/>
    <property type="evidence" value="ECO:0007669"/>
    <property type="project" value="InterPro"/>
</dbReference>
<dbReference type="GO" id="GO:0016829">
    <property type="term" value="F:lyase activity"/>
    <property type="evidence" value="ECO:0007669"/>
    <property type="project" value="UniProtKB-KW"/>
</dbReference>
<dbReference type="GO" id="GO:0004508">
    <property type="term" value="F:steroid 17-alpha-monooxygenase activity"/>
    <property type="evidence" value="ECO:0000250"/>
    <property type="project" value="UniProtKB"/>
</dbReference>
<dbReference type="GO" id="GO:0006704">
    <property type="term" value="P:glucocorticoid biosynthetic process"/>
    <property type="evidence" value="ECO:0007669"/>
    <property type="project" value="UniProtKB-UniPathway"/>
</dbReference>
<dbReference type="GO" id="GO:0042446">
    <property type="term" value="P:hormone biosynthetic process"/>
    <property type="evidence" value="ECO:0000250"/>
    <property type="project" value="UniProtKB"/>
</dbReference>
<dbReference type="GO" id="GO:0042448">
    <property type="term" value="P:progesterone metabolic process"/>
    <property type="evidence" value="ECO:0000250"/>
    <property type="project" value="UniProtKB"/>
</dbReference>
<dbReference type="GO" id="GO:0008202">
    <property type="term" value="P:steroid metabolic process"/>
    <property type="evidence" value="ECO:0000250"/>
    <property type="project" value="UniProtKB"/>
</dbReference>
<dbReference type="CDD" id="cd20673">
    <property type="entry name" value="CYP17A1"/>
    <property type="match status" value="1"/>
</dbReference>
<dbReference type="FunFam" id="1.10.630.10:FF:000002">
    <property type="entry name" value="Cytochrome P450 1A1"/>
    <property type="match status" value="1"/>
</dbReference>
<dbReference type="Gene3D" id="1.10.630.10">
    <property type="entry name" value="Cytochrome P450"/>
    <property type="match status" value="1"/>
</dbReference>
<dbReference type="InterPro" id="IPR001128">
    <property type="entry name" value="Cyt_P450"/>
</dbReference>
<dbReference type="InterPro" id="IPR017972">
    <property type="entry name" value="Cyt_P450_CS"/>
</dbReference>
<dbReference type="InterPro" id="IPR002401">
    <property type="entry name" value="Cyt_P450_E_grp-I"/>
</dbReference>
<dbReference type="InterPro" id="IPR036396">
    <property type="entry name" value="Cyt_P450_sf"/>
</dbReference>
<dbReference type="PANTHER" id="PTHR24289">
    <property type="entry name" value="STEROID 17-ALPHA-HYDROXYLASE/17,20 LYASE"/>
    <property type="match status" value="1"/>
</dbReference>
<dbReference type="PANTHER" id="PTHR24289:SF13">
    <property type="entry name" value="STEROID 17-ALPHA-HYDROXYLASE_17,20 LYASE"/>
    <property type="match status" value="1"/>
</dbReference>
<dbReference type="Pfam" id="PF00067">
    <property type="entry name" value="p450"/>
    <property type="match status" value="1"/>
</dbReference>
<dbReference type="PRINTS" id="PR00463">
    <property type="entry name" value="EP450I"/>
</dbReference>
<dbReference type="PRINTS" id="PR00385">
    <property type="entry name" value="P450"/>
</dbReference>
<dbReference type="SUPFAM" id="SSF48264">
    <property type="entry name" value="Cytochrome P450"/>
    <property type="match status" value="1"/>
</dbReference>
<dbReference type="PROSITE" id="PS00086">
    <property type="entry name" value="CYTOCHROME_P450"/>
    <property type="match status" value="1"/>
</dbReference>
<reference key="1">
    <citation type="journal article" date="2002" name="Endocrinology">
        <title>Molecular evolution of adrenarche: structural and functional analysis of p450c17 from four primate species.</title>
        <authorList>
            <person name="Arlt W."/>
            <person name="Martens J.W."/>
            <person name="Song M."/>
            <person name="Wang J.T."/>
            <person name="Auchus R.J."/>
            <person name="Miller W.L."/>
        </authorList>
    </citation>
    <scope>NUCLEOTIDE SEQUENCE [MRNA]</scope>
</reference>
<sequence length="508" mass="57619">MWELVALLLLTLAYLFWPKRRCPGAKYPKSLLSLPLVGSLPFLPRHGHMHNNFFKLQKKYGPIYSVRMGTKTTVIVGHHQLAKEVLIKKGKDFSGRPQVTTLDILSNNRKGIAFADYGAHWQLHRRLAMATFALFKDGDQKLEKIICQEISTLCDMLATHNGQTIDISFPVFVAITNVISLICFNISYKNGDPELKIVHNYNEGIIDSLGKESLVDLFPWLKVFPNKTLEKLKRHVKTRNDLLTKIFENYKEKFHSDSITNMLDVLMQAKMNSDNGNAGPDQDSELLSDNHILTTIGDIFGAGVETTTSVVKWIVAFLLHNPQVKKKLYEEIDQNVGFSRTPTISDRNRLLLLEATIREVLRIRPVAPMLIPHKANVDSSIGEFAVDKGTHVIINLWALHHNEKEWHQPDQFMPERFLNPAGTQLISPSLSYLPFGAGPRSCIGEILARQELFLIMAWLLQRFDLEVPDDGQLPSLEGNPKVVFLIDSFKVKIKVRQAWREAQAEGST</sequence>
<organism>
    <name type="scientific">Macaca mulatta</name>
    <name type="common">Rhesus macaque</name>
    <dbReference type="NCBI Taxonomy" id="9544"/>
    <lineage>
        <taxon>Eukaryota</taxon>
        <taxon>Metazoa</taxon>
        <taxon>Chordata</taxon>
        <taxon>Craniata</taxon>
        <taxon>Vertebrata</taxon>
        <taxon>Euteleostomi</taxon>
        <taxon>Mammalia</taxon>
        <taxon>Eutheria</taxon>
        <taxon>Euarchontoglires</taxon>
        <taxon>Primates</taxon>
        <taxon>Haplorrhini</taxon>
        <taxon>Catarrhini</taxon>
        <taxon>Cercopithecidae</taxon>
        <taxon>Cercopithecinae</taxon>
        <taxon>Macaca</taxon>
    </lineage>
</organism>
<feature type="chain" id="PRO_0000051933" description="Steroid 17-alpha-hydroxylase/17,20 lyase">
    <location>
        <begin position="1"/>
        <end position="508"/>
    </location>
</feature>
<feature type="binding site" evidence="2">
    <location>
        <position position="202"/>
    </location>
    <ligand>
        <name>substrate</name>
    </ligand>
</feature>
<feature type="binding site" description="axial binding residue" evidence="1">
    <location>
        <position position="442"/>
    </location>
    <ligand>
        <name>heme</name>
        <dbReference type="ChEBI" id="CHEBI:30413"/>
    </ligand>
    <ligandPart>
        <name>Fe</name>
        <dbReference type="ChEBI" id="CHEBI:18248"/>
    </ligandPart>
</feature>
<evidence type="ECO:0000250" key="1"/>
<evidence type="ECO:0000250" key="2">
    <source>
        <dbReference type="UniProtKB" id="P05093"/>
    </source>
</evidence>
<evidence type="ECO:0000305" key="3"/>
<proteinExistence type="evidence at transcript level"/>
<accession>Q8HYM9</accession>
<gene>
    <name type="primary">CYP17A1</name>
    <name type="synonym">CYP17</name>
</gene>
<comment type="function">
    <text evidence="2">A cytochrome P450 monooxygenase involved in corticoid and androgen biosynthesis. Catalyzes 17-alpha hydroxylation of C21 steroids, which is common for both pathways. A second oxidative step, required only for androgen synthesis, involves an acyl-carbon cleavage. The 17-alpha hydroxy intermediates, as part of adrenal glucocorticoids biosynthesis pathway, are precursors of cortisol. Hydroxylates steroid hormones, pregnenolone and progesterone to form 17-alpha hydroxy metabolites, followed by the cleavage of the C17-C20 bond to form C19 steroids, dehydroepiandrosterone (DHEA) and androstenedione. Has 16-alpha hydroxylase activity. Catalyzes 16-alpha hydroxylation of 17-alpha hydroxy pregnenolone, followed by the cleavage of the C17-C20 bond to form 16-alpha-hydroxy DHEA. Also 16-alpha hydroxylates androgens, relevant for estriol synthesis. Mechanistically, uses molecular oxygen inserting one oxygen atom into a substrate, and reducing the second into a water molecule, with two electrons provided by NADPH via cytochrome P450 reductase (CPR; NADPH-ferrihemoprotein reductase).</text>
</comment>
<comment type="catalytic activity">
    <reaction evidence="2">
        <text>a C21-steroid + reduced [NADPH--hemoprotein reductase] + O2 = a 17alpha-hydroxy-C21-steroid + oxidized [NADPH--hemoprotein reductase] + H2O + H(+)</text>
        <dbReference type="Rhea" id="RHEA:65760"/>
        <dbReference type="Rhea" id="RHEA-COMP:11964"/>
        <dbReference type="Rhea" id="RHEA-COMP:11965"/>
        <dbReference type="ChEBI" id="CHEBI:15377"/>
        <dbReference type="ChEBI" id="CHEBI:15378"/>
        <dbReference type="ChEBI" id="CHEBI:15379"/>
        <dbReference type="ChEBI" id="CHEBI:57618"/>
        <dbReference type="ChEBI" id="CHEBI:58210"/>
        <dbReference type="ChEBI" id="CHEBI:61313"/>
        <dbReference type="ChEBI" id="CHEBI:138141"/>
        <dbReference type="EC" id="1.14.14.19"/>
    </reaction>
    <physiologicalReaction direction="left-to-right" evidence="2">
        <dbReference type="Rhea" id="RHEA:65761"/>
    </physiologicalReaction>
</comment>
<comment type="catalytic activity">
    <reaction evidence="2">
        <text>progesterone + reduced [NADPH--hemoprotein reductase] + O2 = 17alpha-hydroxyprogesterone + oxidized [NADPH--hemoprotein reductase] + H2O + H(+)</text>
        <dbReference type="Rhea" id="RHEA:46308"/>
        <dbReference type="Rhea" id="RHEA-COMP:11964"/>
        <dbReference type="Rhea" id="RHEA-COMP:11965"/>
        <dbReference type="ChEBI" id="CHEBI:15377"/>
        <dbReference type="ChEBI" id="CHEBI:15378"/>
        <dbReference type="ChEBI" id="CHEBI:15379"/>
        <dbReference type="ChEBI" id="CHEBI:17026"/>
        <dbReference type="ChEBI" id="CHEBI:17252"/>
        <dbReference type="ChEBI" id="CHEBI:57618"/>
        <dbReference type="ChEBI" id="CHEBI:58210"/>
        <dbReference type="EC" id="1.14.14.19"/>
    </reaction>
    <physiologicalReaction direction="left-to-right" evidence="2">
        <dbReference type="Rhea" id="RHEA:46309"/>
    </physiologicalReaction>
</comment>
<comment type="catalytic activity">
    <reaction evidence="2">
        <text>pregnenolone + reduced [NADPH--hemoprotein reductase] + O2 = 17alpha-hydroxypregnenolone + oxidized [NADPH--hemoprotein reductase] + H2O + H(+)</text>
        <dbReference type="Rhea" id="RHEA:50236"/>
        <dbReference type="Rhea" id="RHEA-COMP:11964"/>
        <dbReference type="Rhea" id="RHEA-COMP:11965"/>
        <dbReference type="ChEBI" id="CHEBI:15377"/>
        <dbReference type="ChEBI" id="CHEBI:15378"/>
        <dbReference type="ChEBI" id="CHEBI:15379"/>
        <dbReference type="ChEBI" id="CHEBI:16581"/>
        <dbReference type="ChEBI" id="CHEBI:28750"/>
        <dbReference type="ChEBI" id="CHEBI:57618"/>
        <dbReference type="ChEBI" id="CHEBI:58210"/>
        <dbReference type="EC" id="1.14.14.19"/>
    </reaction>
    <physiologicalReaction direction="left-to-right" evidence="2">
        <dbReference type="Rhea" id="RHEA:50237"/>
    </physiologicalReaction>
</comment>
<comment type="catalytic activity">
    <reaction evidence="2">
        <text>17alpha-hydroxyprogesterone + reduced [NADPH--hemoprotein reductase] + O2 = androst-4-ene-3,17-dione + acetate + oxidized [NADPH--hemoprotein reductase] + H2O + 2 H(+)</text>
        <dbReference type="Rhea" id="RHEA:14753"/>
        <dbReference type="Rhea" id="RHEA-COMP:11964"/>
        <dbReference type="Rhea" id="RHEA-COMP:11965"/>
        <dbReference type="ChEBI" id="CHEBI:15377"/>
        <dbReference type="ChEBI" id="CHEBI:15378"/>
        <dbReference type="ChEBI" id="CHEBI:15379"/>
        <dbReference type="ChEBI" id="CHEBI:16422"/>
        <dbReference type="ChEBI" id="CHEBI:17252"/>
        <dbReference type="ChEBI" id="CHEBI:30089"/>
        <dbReference type="ChEBI" id="CHEBI:57618"/>
        <dbReference type="ChEBI" id="CHEBI:58210"/>
        <dbReference type="EC" id="1.14.14.32"/>
    </reaction>
    <physiologicalReaction direction="left-to-right" evidence="2">
        <dbReference type="Rhea" id="RHEA:14754"/>
    </physiologicalReaction>
</comment>
<comment type="catalytic activity">
    <reaction evidence="2">
        <text>17alpha-hydroxyprogesterone + reduced [NADPH--hemoprotein reductase] + O2 = 16alpha,17alpha-dihydroxyprogesterone + oxidized [NADPH--hemoprotein reductase] + H2O + H(+)</text>
        <dbReference type="Rhea" id="RHEA:53216"/>
        <dbReference type="Rhea" id="RHEA-COMP:11964"/>
        <dbReference type="Rhea" id="RHEA-COMP:11965"/>
        <dbReference type="ChEBI" id="CHEBI:763"/>
        <dbReference type="ChEBI" id="CHEBI:15377"/>
        <dbReference type="ChEBI" id="CHEBI:15378"/>
        <dbReference type="ChEBI" id="CHEBI:15379"/>
        <dbReference type="ChEBI" id="CHEBI:17252"/>
        <dbReference type="ChEBI" id="CHEBI:57618"/>
        <dbReference type="ChEBI" id="CHEBI:58210"/>
    </reaction>
    <physiologicalReaction direction="left-to-right" evidence="2">
        <dbReference type="Rhea" id="RHEA:53217"/>
    </physiologicalReaction>
</comment>
<comment type="catalytic activity">
    <reaction evidence="2">
        <text>16alpha,17alpha-dihydroxyprogesterone + reduced [NADPH--hemoprotein reductase] + O2 = 6beta,16alpha,17alpha-trihydroxyprogesterone + oxidized [NADPH--hemoprotein reductase] + H2O + H(+)</text>
        <dbReference type="Rhea" id="RHEA:53220"/>
        <dbReference type="Rhea" id="RHEA-COMP:11964"/>
        <dbReference type="Rhea" id="RHEA-COMP:11965"/>
        <dbReference type="ChEBI" id="CHEBI:763"/>
        <dbReference type="ChEBI" id="CHEBI:15377"/>
        <dbReference type="ChEBI" id="CHEBI:15378"/>
        <dbReference type="ChEBI" id="CHEBI:15379"/>
        <dbReference type="ChEBI" id="CHEBI:57618"/>
        <dbReference type="ChEBI" id="CHEBI:58210"/>
        <dbReference type="ChEBI" id="CHEBI:137046"/>
    </reaction>
    <physiologicalReaction direction="left-to-right" evidence="2">
        <dbReference type="Rhea" id="RHEA:53221"/>
    </physiologicalReaction>
</comment>
<comment type="catalytic activity">
    <reaction evidence="2">
        <text>17alpha-hydroxypregnenolone + reduced [NADPH--hemoprotein reductase] + O2 = 3beta-hydroxyandrost-5-en-17-one + acetate + oxidized [NADPH--hemoprotein reductase] + H2O + 2 H(+)</text>
        <dbReference type="Rhea" id="RHEA:50244"/>
        <dbReference type="Rhea" id="RHEA-COMP:11964"/>
        <dbReference type="Rhea" id="RHEA-COMP:11965"/>
        <dbReference type="ChEBI" id="CHEBI:15377"/>
        <dbReference type="ChEBI" id="CHEBI:15378"/>
        <dbReference type="ChEBI" id="CHEBI:15379"/>
        <dbReference type="ChEBI" id="CHEBI:28689"/>
        <dbReference type="ChEBI" id="CHEBI:28750"/>
        <dbReference type="ChEBI" id="CHEBI:30089"/>
        <dbReference type="ChEBI" id="CHEBI:57618"/>
        <dbReference type="ChEBI" id="CHEBI:58210"/>
        <dbReference type="EC" id="1.14.14.32"/>
    </reaction>
    <physiologicalReaction direction="left-to-right" evidence="2">
        <dbReference type="Rhea" id="RHEA:50245"/>
    </physiologicalReaction>
</comment>
<comment type="catalytic activity">
    <reaction evidence="2">
        <text>16alpha,17alpha-dihydroxypregnenolone + reduced [NADPH--hemoprotein reductase] + O2 = 3beta,16alpha-dihydroxy-androst-5-en-17-one + acetate + oxidized [NADPH--hemoprotein reductase] + H2O + 2 H(+)</text>
        <dbReference type="Rhea" id="RHEA:53224"/>
        <dbReference type="Rhea" id="RHEA-COMP:11964"/>
        <dbReference type="Rhea" id="RHEA-COMP:11965"/>
        <dbReference type="ChEBI" id="CHEBI:15377"/>
        <dbReference type="ChEBI" id="CHEBI:15378"/>
        <dbReference type="ChEBI" id="CHEBI:15379"/>
        <dbReference type="ChEBI" id="CHEBI:27771"/>
        <dbReference type="ChEBI" id="CHEBI:30089"/>
        <dbReference type="ChEBI" id="CHEBI:57618"/>
        <dbReference type="ChEBI" id="CHEBI:58210"/>
        <dbReference type="ChEBI" id="CHEBI:137049"/>
    </reaction>
    <physiologicalReaction direction="left-to-right" evidence="2">
        <dbReference type="Rhea" id="RHEA:53225"/>
    </physiologicalReaction>
</comment>
<comment type="catalytic activity">
    <reaction evidence="2">
        <text>3beta-hydroxyandrost-5-en-17-one + reduced [NADPH--hemoprotein reductase] + O2 = 3beta,16alpha-dihydroxy-androst-5-en-17-one + oxidized [NADPH--hemoprotein reductase] + H2O + H(+)</text>
        <dbReference type="Rhea" id="RHEA:47220"/>
        <dbReference type="Rhea" id="RHEA-COMP:11964"/>
        <dbReference type="Rhea" id="RHEA-COMP:11965"/>
        <dbReference type="ChEBI" id="CHEBI:15377"/>
        <dbReference type="ChEBI" id="CHEBI:15378"/>
        <dbReference type="ChEBI" id="CHEBI:15379"/>
        <dbReference type="ChEBI" id="CHEBI:27771"/>
        <dbReference type="ChEBI" id="CHEBI:28689"/>
        <dbReference type="ChEBI" id="CHEBI:57618"/>
        <dbReference type="ChEBI" id="CHEBI:58210"/>
    </reaction>
    <physiologicalReaction direction="left-to-right" evidence="2">
        <dbReference type="Rhea" id="RHEA:47221"/>
    </physiologicalReaction>
</comment>
<comment type="catalytic activity">
    <reaction evidence="2">
        <text>androst-4-ene-3,17-dione + reduced [NADPH--hemoprotein reductase] + O2 = 16alpha-hydroxyandrost-4-ene-3,17-dione + oxidized [NADPH--hemoprotein reductase] + H2O + H(+)</text>
        <dbReference type="Rhea" id="RHEA:53228"/>
        <dbReference type="Rhea" id="RHEA-COMP:11964"/>
        <dbReference type="Rhea" id="RHEA-COMP:11965"/>
        <dbReference type="ChEBI" id="CHEBI:15377"/>
        <dbReference type="ChEBI" id="CHEBI:15378"/>
        <dbReference type="ChEBI" id="CHEBI:15379"/>
        <dbReference type="ChEBI" id="CHEBI:16422"/>
        <dbReference type="ChEBI" id="CHEBI:27582"/>
        <dbReference type="ChEBI" id="CHEBI:57618"/>
        <dbReference type="ChEBI" id="CHEBI:58210"/>
    </reaction>
    <physiologicalReaction direction="left-to-right" evidence="2">
        <dbReference type="Rhea" id="RHEA:53229"/>
    </physiologicalReaction>
</comment>
<comment type="cofactor">
    <cofactor evidence="2">
        <name>heme</name>
        <dbReference type="ChEBI" id="CHEBI:30413"/>
    </cofactor>
</comment>
<comment type="activity regulation">
    <text evidence="2">Regulated predominantly by intracellular cAMP levels. The 17,20-lyase activity is stimulated by cytochrome b5, which acts as an allosteric effector increasing the Vmax of the lyase activity.</text>
</comment>
<comment type="pathway">
    <text evidence="2">Steroid hormone biosynthesis.</text>
</comment>
<comment type="pathway">
    <text evidence="2">Steroid biosynthesis; glucocorticoid biosynthesis.</text>
</comment>
<comment type="subcellular location">
    <subcellularLocation>
        <location evidence="2">Endoplasmic reticulum membrane</location>
    </subcellularLocation>
    <subcellularLocation>
        <location evidence="2">Microsome membrane</location>
    </subcellularLocation>
</comment>
<comment type="similarity">
    <text evidence="3">Belongs to the cytochrome P450 family.</text>
</comment>
<protein>
    <recommendedName>
        <fullName>Steroid 17-alpha-hydroxylase/17,20 lyase</fullName>
        <ecNumber evidence="2">1.14.14.19</ecNumber>
    </recommendedName>
    <alternativeName>
        <fullName>17-alpha-hydroxyprogesterone aldolase</fullName>
        <ecNumber evidence="2">1.14.14.32</ecNumber>
    </alternativeName>
    <alternativeName>
        <fullName>CYPXVII</fullName>
    </alternativeName>
    <alternativeName>
        <fullName>Cytochrome P450 17A1</fullName>
    </alternativeName>
    <alternativeName>
        <fullName>Cytochrome P450-C17</fullName>
        <shortName>Cytochrome P450c17</shortName>
    </alternativeName>
    <alternativeName>
        <fullName>Steroid 17-alpha-monooxygenase</fullName>
    </alternativeName>
</protein>
<name>CP17A_MACMU</name>